<feature type="chain" id="PRO_0000065824" description="Chromatin modification-related protein EAF1">
    <location>
        <begin position="1"/>
        <end position="967"/>
    </location>
</feature>
<feature type="domain" description="HSA" evidence="3">
    <location>
        <begin position="195"/>
        <end position="276"/>
    </location>
</feature>
<feature type="domain" description="Myb-like" evidence="2">
    <location>
        <begin position="469"/>
        <end position="529"/>
    </location>
</feature>
<feature type="region of interest" description="Disordered" evidence="4">
    <location>
        <begin position="60"/>
        <end position="97"/>
    </location>
</feature>
<feature type="region of interest" description="Disordered" evidence="4">
    <location>
        <begin position="264"/>
        <end position="283"/>
    </location>
</feature>
<feature type="region of interest" description="Disordered" evidence="4">
    <location>
        <begin position="311"/>
        <end position="352"/>
    </location>
</feature>
<feature type="region of interest" description="Disordered" evidence="4">
    <location>
        <begin position="587"/>
        <end position="621"/>
    </location>
</feature>
<feature type="region of interest" description="Disordered" evidence="4">
    <location>
        <begin position="653"/>
        <end position="680"/>
    </location>
</feature>
<feature type="region of interest" description="Disordered" evidence="4">
    <location>
        <begin position="774"/>
        <end position="806"/>
    </location>
</feature>
<feature type="region of interest" description="Disordered" evidence="4">
    <location>
        <begin position="864"/>
        <end position="967"/>
    </location>
</feature>
<feature type="compositionally biased region" description="Basic and acidic residues" evidence="4">
    <location>
        <begin position="60"/>
        <end position="70"/>
    </location>
</feature>
<feature type="compositionally biased region" description="Acidic residues" evidence="4">
    <location>
        <begin position="319"/>
        <end position="336"/>
    </location>
</feature>
<feature type="compositionally biased region" description="Low complexity" evidence="4">
    <location>
        <begin position="864"/>
        <end position="932"/>
    </location>
</feature>
<feature type="compositionally biased region" description="Low complexity" evidence="4">
    <location>
        <begin position="940"/>
        <end position="967"/>
    </location>
</feature>
<dbReference type="EMBL" id="CR382130">
    <property type="protein sequence ID" value="CAG81560.1"/>
    <property type="molecule type" value="Genomic_DNA"/>
</dbReference>
<dbReference type="RefSeq" id="XP_503354.1">
    <property type="nucleotide sequence ID" value="XM_503354.1"/>
</dbReference>
<dbReference type="SMR" id="Q6C7K8"/>
<dbReference type="FunCoup" id="Q6C7K8">
    <property type="interactions" value="232"/>
</dbReference>
<dbReference type="STRING" id="284591.Q6C7K8"/>
<dbReference type="EnsemblFungi" id="CAG81560">
    <property type="protein sequence ID" value="CAG81560"/>
    <property type="gene ID" value="YALI0_D27258g"/>
</dbReference>
<dbReference type="KEGG" id="yli:2910300"/>
<dbReference type="VEuPathDB" id="FungiDB:YALI0_D27258g"/>
<dbReference type="HOGENOM" id="CLU_006174_0_1_1"/>
<dbReference type="InParanoid" id="Q6C7K8"/>
<dbReference type="OMA" id="HDWMLAR"/>
<dbReference type="OrthoDB" id="126471at4891"/>
<dbReference type="Proteomes" id="UP000001300">
    <property type="component" value="Chromosome D"/>
</dbReference>
<dbReference type="GO" id="GO:0035267">
    <property type="term" value="C:NuA4 histone acetyltransferase complex"/>
    <property type="evidence" value="ECO:0000318"/>
    <property type="project" value="GO_Central"/>
</dbReference>
<dbReference type="GO" id="GO:0005634">
    <property type="term" value="C:nucleus"/>
    <property type="evidence" value="ECO:0007669"/>
    <property type="project" value="UniProtKB-SubCell"/>
</dbReference>
<dbReference type="GO" id="GO:0003682">
    <property type="term" value="F:chromatin binding"/>
    <property type="evidence" value="ECO:0000318"/>
    <property type="project" value="GO_Central"/>
</dbReference>
<dbReference type="GO" id="GO:0006325">
    <property type="term" value="P:chromatin organization"/>
    <property type="evidence" value="ECO:0007669"/>
    <property type="project" value="UniProtKB-KW"/>
</dbReference>
<dbReference type="GO" id="GO:0006281">
    <property type="term" value="P:DNA repair"/>
    <property type="evidence" value="ECO:0000318"/>
    <property type="project" value="GO_Central"/>
</dbReference>
<dbReference type="CDD" id="cd00167">
    <property type="entry name" value="SANT"/>
    <property type="match status" value="1"/>
</dbReference>
<dbReference type="Gene3D" id="1.10.10.60">
    <property type="entry name" value="Homeodomain-like"/>
    <property type="match status" value="1"/>
</dbReference>
<dbReference type="InterPro" id="IPR009057">
    <property type="entry name" value="Homeodomain-like_sf"/>
</dbReference>
<dbReference type="InterPro" id="IPR014012">
    <property type="entry name" value="HSA_dom"/>
</dbReference>
<dbReference type="InterPro" id="IPR001005">
    <property type="entry name" value="SANT/Myb"/>
</dbReference>
<dbReference type="PANTHER" id="PTHR46459:SF1">
    <property type="entry name" value="E1A-BINDING PROTEIN P400"/>
    <property type="match status" value="1"/>
</dbReference>
<dbReference type="PANTHER" id="PTHR46459">
    <property type="entry name" value="E1A-BINDING PROTEIN P400-RELATED"/>
    <property type="match status" value="1"/>
</dbReference>
<dbReference type="Pfam" id="PF07529">
    <property type="entry name" value="HSA"/>
    <property type="match status" value="1"/>
</dbReference>
<dbReference type="Pfam" id="PF13921">
    <property type="entry name" value="Myb_DNA-bind_6"/>
    <property type="match status" value="1"/>
</dbReference>
<dbReference type="SMART" id="SM00573">
    <property type="entry name" value="HSA"/>
    <property type="match status" value="1"/>
</dbReference>
<dbReference type="SMART" id="SM00717">
    <property type="entry name" value="SANT"/>
    <property type="match status" value="1"/>
</dbReference>
<dbReference type="SUPFAM" id="SSF46689">
    <property type="entry name" value="Homeodomain-like"/>
    <property type="match status" value="1"/>
</dbReference>
<dbReference type="PROSITE" id="PS51204">
    <property type="entry name" value="HSA"/>
    <property type="match status" value="1"/>
</dbReference>
<dbReference type="PROSITE" id="PS50090">
    <property type="entry name" value="MYB_LIKE"/>
    <property type="match status" value="1"/>
</dbReference>
<proteinExistence type="inferred from homology"/>
<reference key="1">
    <citation type="journal article" date="2004" name="Nature">
        <title>Genome evolution in yeasts.</title>
        <authorList>
            <person name="Dujon B."/>
            <person name="Sherman D."/>
            <person name="Fischer G."/>
            <person name="Durrens P."/>
            <person name="Casaregola S."/>
            <person name="Lafontaine I."/>
            <person name="de Montigny J."/>
            <person name="Marck C."/>
            <person name="Neuveglise C."/>
            <person name="Talla E."/>
            <person name="Goffard N."/>
            <person name="Frangeul L."/>
            <person name="Aigle M."/>
            <person name="Anthouard V."/>
            <person name="Babour A."/>
            <person name="Barbe V."/>
            <person name="Barnay S."/>
            <person name="Blanchin S."/>
            <person name="Beckerich J.-M."/>
            <person name="Beyne E."/>
            <person name="Bleykasten C."/>
            <person name="Boisrame A."/>
            <person name="Boyer J."/>
            <person name="Cattolico L."/>
            <person name="Confanioleri F."/>
            <person name="de Daruvar A."/>
            <person name="Despons L."/>
            <person name="Fabre E."/>
            <person name="Fairhead C."/>
            <person name="Ferry-Dumazet H."/>
            <person name="Groppi A."/>
            <person name="Hantraye F."/>
            <person name="Hennequin C."/>
            <person name="Jauniaux N."/>
            <person name="Joyet P."/>
            <person name="Kachouri R."/>
            <person name="Kerrest A."/>
            <person name="Koszul R."/>
            <person name="Lemaire M."/>
            <person name="Lesur I."/>
            <person name="Ma L."/>
            <person name="Muller H."/>
            <person name="Nicaud J.-M."/>
            <person name="Nikolski M."/>
            <person name="Oztas S."/>
            <person name="Ozier-Kalogeropoulos O."/>
            <person name="Pellenz S."/>
            <person name="Potier S."/>
            <person name="Richard G.-F."/>
            <person name="Straub M.-L."/>
            <person name="Suleau A."/>
            <person name="Swennen D."/>
            <person name="Tekaia F."/>
            <person name="Wesolowski-Louvel M."/>
            <person name="Westhof E."/>
            <person name="Wirth B."/>
            <person name="Zeniou-Meyer M."/>
            <person name="Zivanovic Y."/>
            <person name="Bolotin-Fukuhara M."/>
            <person name="Thierry A."/>
            <person name="Bouchier C."/>
            <person name="Caudron B."/>
            <person name="Scarpelli C."/>
            <person name="Gaillardin C."/>
            <person name="Weissenbach J."/>
            <person name="Wincker P."/>
            <person name="Souciet J.-L."/>
        </authorList>
    </citation>
    <scope>NUCLEOTIDE SEQUENCE [LARGE SCALE GENOMIC DNA]</scope>
    <source>
        <strain>CLIB 122 / E 150</strain>
    </source>
</reference>
<comment type="function">
    <text evidence="1">Component of the NuA4 histone acetyltransferase complex which is involved in transcriptional activation of selected genes principally by acetylation of nucleosomal histone H4 and H2A. The NuA4 complex is also involved in DNA repair (By similarity).</text>
</comment>
<comment type="subunit">
    <text evidence="1">Component of the NuA4 histone acetyltransferase complex.</text>
</comment>
<comment type="subcellular location">
    <subcellularLocation>
        <location evidence="5">Nucleus</location>
    </subcellularLocation>
</comment>
<comment type="similarity">
    <text evidence="5">Belongs to the EAF1 family.</text>
</comment>
<evidence type="ECO:0000250" key="1"/>
<evidence type="ECO:0000255" key="2">
    <source>
        <dbReference type="PROSITE-ProRule" id="PRU00133"/>
    </source>
</evidence>
<evidence type="ECO:0000255" key="3">
    <source>
        <dbReference type="PROSITE-ProRule" id="PRU00549"/>
    </source>
</evidence>
<evidence type="ECO:0000256" key="4">
    <source>
        <dbReference type="SAM" id="MobiDB-lite"/>
    </source>
</evidence>
<evidence type="ECO:0000305" key="5"/>
<protein>
    <recommendedName>
        <fullName>Chromatin modification-related protein EAF1</fullName>
    </recommendedName>
    <alternativeName>
        <fullName>ESA1-associated factor 1</fullName>
    </alternativeName>
    <alternativeName>
        <fullName>Vacuolar import and degradation protein 21</fullName>
    </alternativeName>
</protein>
<keyword id="KW-0010">Activator</keyword>
<keyword id="KW-0156">Chromatin regulator</keyword>
<keyword id="KW-0227">DNA damage</keyword>
<keyword id="KW-0234">DNA repair</keyword>
<keyword id="KW-0539">Nucleus</keyword>
<keyword id="KW-1185">Reference proteome</keyword>
<keyword id="KW-0804">Transcription</keyword>
<keyword id="KW-0805">Transcription regulation</keyword>
<name>EAF1_YARLI</name>
<accession>Q6C7K8</accession>
<organism>
    <name type="scientific">Yarrowia lipolytica (strain CLIB 122 / E 150)</name>
    <name type="common">Yeast</name>
    <name type="synonym">Candida lipolytica</name>
    <dbReference type="NCBI Taxonomy" id="284591"/>
    <lineage>
        <taxon>Eukaryota</taxon>
        <taxon>Fungi</taxon>
        <taxon>Dikarya</taxon>
        <taxon>Ascomycota</taxon>
        <taxon>Saccharomycotina</taxon>
        <taxon>Dipodascomycetes</taxon>
        <taxon>Dipodascales</taxon>
        <taxon>Dipodascales incertae sedis</taxon>
        <taxon>Yarrowia</taxon>
    </lineage>
</organism>
<sequence length="967" mass="108946">MMDPRQETCGDIVSTRKRRLEELYYVSLHPRYPQGLDAKQKLKQFQDQFDLTQNRLFDENKLPKAVEEPKPVPTLQTSTPDAGSSPELKRRRTSSIAQLSPTFSRTSLKTNEQQLQEMLLFLVPSNIPEPTTETKSLAELYYTTQTLPLSKLIPSAHKTLTTDSYHLALLEGKLAVAHARIEELKRAGKWGPRQPKRFQDPIRRKTHWDHVLDEMEWMSTDFREERKFKQAMACEIAFSVLEYHKYGKEACCVKTKPIKFLPEEINESEDTESKMDIDTSMPPPSINPVEVTNISAADSVTVVDYDTLLSQPRTLSSTEESEDKPEEPSTDSEEVVGGEVPKRPAAPKLPESSPFKLYASVDKLDPLSKALFDNLPVTTPPGSAVNALQVPYSDPLDNSKLAPVTHLLAAPPEQDDWWSVCLEDSPADEDPLPLRSNTRSTLFNSETMRRHVVIKAPQPPQTKYLDFRTPTMWLLADDSQLLRLVKEYSYNWDIVSAHMLPQKTYGFTANIERRTSWQCFERWFQLNPTFSLTDLRGPYAQAAQQWMAAAAKAQAQSKRRISPLGVSNESIQRGHRKLRWASMFDGIRKSMRKRETTPRPNPQPPRKSQLSESNKKDIASPLDLCKMKFEQDKNLAKAYAQQRMMPGQMPGQMPPVPSNIPANRQFPGQRPPPPQTAAQIQAHTQAQARAAAAASGHMQQRMAGVGMNRMPGQMNDQHQMMQFDRQRQLMEQQKMLQQQQQQQFMRTQGQVPPQPGQVQGQVNQNVQGAQVAAGQAGMAQRPAGQIPQGQMPAQQGQVPPGQAGNQAQMMRPNMRMRPGGPQAAAPNEHLNALIRQLQNQNPALSLEAATKLAHVQVQRFVQKQQRVARQAQGQTPPQGQMRPGQPQGQPSPQMRSGSSTPMNMQSPQLMNVQLQQQQQQRSASPGQSPAQQHAMLMRMNQQQQQQQQQQQNQGQTQGQNQGQGPSE</sequence>
<gene>
    <name type="primary">EAF1</name>
    <name type="synonym">VID21</name>
    <name type="ordered locus">YALI0D27258g</name>
</gene>